<dbReference type="EC" id="3.6.5.n1" evidence="1"/>
<dbReference type="EMBL" id="CP001336">
    <property type="protein sequence ID" value="ACL22312.1"/>
    <property type="molecule type" value="Genomic_DNA"/>
</dbReference>
<dbReference type="RefSeq" id="WP_005816487.1">
    <property type="nucleotide sequence ID" value="NC_011830.1"/>
</dbReference>
<dbReference type="SMR" id="B8FUP2"/>
<dbReference type="KEGG" id="dhd:Dhaf_4307"/>
<dbReference type="HOGENOM" id="CLU_009995_3_3_9"/>
<dbReference type="Proteomes" id="UP000007726">
    <property type="component" value="Chromosome"/>
</dbReference>
<dbReference type="GO" id="GO:0005886">
    <property type="term" value="C:plasma membrane"/>
    <property type="evidence" value="ECO:0007669"/>
    <property type="project" value="UniProtKB-SubCell"/>
</dbReference>
<dbReference type="GO" id="GO:0005525">
    <property type="term" value="F:GTP binding"/>
    <property type="evidence" value="ECO:0007669"/>
    <property type="project" value="UniProtKB-UniRule"/>
</dbReference>
<dbReference type="GO" id="GO:0003924">
    <property type="term" value="F:GTPase activity"/>
    <property type="evidence" value="ECO:0007669"/>
    <property type="project" value="UniProtKB-UniRule"/>
</dbReference>
<dbReference type="GO" id="GO:0043022">
    <property type="term" value="F:ribosome binding"/>
    <property type="evidence" value="ECO:0007669"/>
    <property type="project" value="UniProtKB-UniRule"/>
</dbReference>
<dbReference type="GO" id="GO:0003746">
    <property type="term" value="F:translation elongation factor activity"/>
    <property type="evidence" value="ECO:0007669"/>
    <property type="project" value="UniProtKB-UniRule"/>
</dbReference>
<dbReference type="GO" id="GO:0045727">
    <property type="term" value="P:positive regulation of translation"/>
    <property type="evidence" value="ECO:0007669"/>
    <property type="project" value="UniProtKB-UniRule"/>
</dbReference>
<dbReference type="CDD" id="cd03699">
    <property type="entry name" value="EF4_II"/>
    <property type="match status" value="1"/>
</dbReference>
<dbReference type="CDD" id="cd16260">
    <property type="entry name" value="EF4_III"/>
    <property type="match status" value="1"/>
</dbReference>
<dbReference type="CDD" id="cd01890">
    <property type="entry name" value="LepA"/>
    <property type="match status" value="1"/>
</dbReference>
<dbReference type="CDD" id="cd03709">
    <property type="entry name" value="lepA_C"/>
    <property type="match status" value="1"/>
</dbReference>
<dbReference type="FunFam" id="3.40.50.300:FF:000078">
    <property type="entry name" value="Elongation factor 4"/>
    <property type="match status" value="1"/>
</dbReference>
<dbReference type="FunFam" id="2.40.30.10:FF:000015">
    <property type="entry name" value="Translation factor GUF1, mitochondrial"/>
    <property type="match status" value="1"/>
</dbReference>
<dbReference type="FunFam" id="3.30.70.240:FF:000007">
    <property type="entry name" value="Translation factor GUF1, mitochondrial"/>
    <property type="match status" value="1"/>
</dbReference>
<dbReference type="FunFam" id="3.30.70.2570:FF:000001">
    <property type="entry name" value="Translation factor GUF1, mitochondrial"/>
    <property type="match status" value="1"/>
</dbReference>
<dbReference type="FunFam" id="3.30.70.870:FF:000004">
    <property type="entry name" value="Translation factor GUF1, mitochondrial"/>
    <property type="match status" value="1"/>
</dbReference>
<dbReference type="Gene3D" id="3.30.70.240">
    <property type="match status" value="1"/>
</dbReference>
<dbReference type="Gene3D" id="3.30.70.2570">
    <property type="entry name" value="Elongation factor 4, C-terminal domain"/>
    <property type="match status" value="1"/>
</dbReference>
<dbReference type="Gene3D" id="3.30.70.870">
    <property type="entry name" value="Elongation Factor G (Translational Gtpase), domain 3"/>
    <property type="match status" value="1"/>
</dbReference>
<dbReference type="Gene3D" id="3.40.50.300">
    <property type="entry name" value="P-loop containing nucleotide triphosphate hydrolases"/>
    <property type="match status" value="1"/>
</dbReference>
<dbReference type="Gene3D" id="2.40.30.10">
    <property type="entry name" value="Translation factors"/>
    <property type="match status" value="1"/>
</dbReference>
<dbReference type="HAMAP" id="MF_00071">
    <property type="entry name" value="LepA"/>
    <property type="match status" value="1"/>
</dbReference>
<dbReference type="InterPro" id="IPR006297">
    <property type="entry name" value="EF-4"/>
</dbReference>
<dbReference type="InterPro" id="IPR035647">
    <property type="entry name" value="EFG_III/V"/>
</dbReference>
<dbReference type="InterPro" id="IPR000640">
    <property type="entry name" value="EFG_V-like"/>
</dbReference>
<dbReference type="InterPro" id="IPR004161">
    <property type="entry name" value="EFTu-like_2"/>
</dbReference>
<dbReference type="InterPro" id="IPR031157">
    <property type="entry name" value="G_TR_CS"/>
</dbReference>
<dbReference type="InterPro" id="IPR038363">
    <property type="entry name" value="LepA_C_sf"/>
</dbReference>
<dbReference type="InterPro" id="IPR013842">
    <property type="entry name" value="LepA_CTD"/>
</dbReference>
<dbReference type="InterPro" id="IPR035654">
    <property type="entry name" value="LepA_IV"/>
</dbReference>
<dbReference type="InterPro" id="IPR027417">
    <property type="entry name" value="P-loop_NTPase"/>
</dbReference>
<dbReference type="InterPro" id="IPR005225">
    <property type="entry name" value="Small_GTP-bd"/>
</dbReference>
<dbReference type="InterPro" id="IPR000795">
    <property type="entry name" value="T_Tr_GTP-bd_dom"/>
</dbReference>
<dbReference type="InterPro" id="IPR009000">
    <property type="entry name" value="Transl_B-barrel_sf"/>
</dbReference>
<dbReference type="NCBIfam" id="TIGR01393">
    <property type="entry name" value="lepA"/>
    <property type="match status" value="1"/>
</dbReference>
<dbReference type="NCBIfam" id="TIGR00231">
    <property type="entry name" value="small_GTP"/>
    <property type="match status" value="1"/>
</dbReference>
<dbReference type="PANTHER" id="PTHR43512:SF4">
    <property type="entry name" value="TRANSLATION FACTOR GUF1 HOMOLOG, CHLOROPLASTIC"/>
    <property type="match status" value="1"/>
</dbReference>
<dbReference type="PANTHER" id="PTHR43512">
    <property type="entry name" value="TRANSLATION FACTOR GUF1-RELATED"/>
    <property type="match status" value="1"/>
</dbReference>
<dbReference type="Pfam" id="PF00679">
    <property type="entry name" value="EFG_C"/>
    <property type="match status" value="1"/>
</dbReference>
<dbReference type="Pfam" id="PF00009">
    <property type="entry name" value="GTP_EFTU"/>
    <property type="match status" value="1"/>
</dbReference>
<dbReference type="Pfam" id="PF03144">
    <property type="entry name" value="GTP_EFTU_D2"/>
    <property type="match status" value="1"/>
</dbReference>
<dbReference type="Pfam" id="PF06421">
    <property type="entry name" value="LepA_C"/>
    <property type="match status" value="1"/>
</dbReference>
<dbReference type="PRINTS" id="PR00315">
    <property type="entry name" value="ELONGATNFCT"/>
</dbReference>
<dbReference type="SMART" id="SM00838">
    <property type="entry name" value="EFG_C"/>
    <property type="match status" value="1"/>
</dbReference>
<dbReference type="SUPFAM" id="SSF54980">
    <property type="entry name" value="EF-G C-terminal domain-like"/>
    <property type="match status" value="2"/>
</dbReference>
<dbReference type="SUPFAM" id="SSF52540">
    <property type="entry name" value="P-loop containing nucleoside triphosphate hydrolases"/>
    <property type="match status" value="1"/>
</dbReference>
<dbReference type="SUPFAM" id="SSF50447">
    <property type="entry name" value="Translation proteins"/>
    <property type="match status" value="1"/>
</dbReference>
<dbReference type="PROSITE" id="PS00301">
    <property type="entry name" value="G_TR_1"/>
    <property type="match status" value="1"/>
</dbReference>
<dbReference type="PROSITE" id="PS51722">
    <property type="entry name" value="G_TR_2"/>
    <property type="match status" value="1"/>
</dbReference>
<sequence>MAQASQCIRNFSIIAHIDHGKSTLADRLIEYTGALSKREMEAQVLDNMDLERERGITIKLQTVRLQYPAKDGQTYELNLIDTPGHVDFTYEVSRSLAACEGALLIVDAAQGIEAQTLANVYLALENNLEIIPVINKIDLPSAEPERVKQEIEDVIGLDASEAILASAKTGIGIEDILEAVVAKVPPPQGDDNTPLKALIFDSYFDAYKGAISYVRVMEGRVAKGTQIKMMSSGKVFDVTEVGMFTPALRIVDEIKAGQVGYIAASIKNVRDTQVGDTITDAENAALYPLPGYRKATPMVFCGLYPVDSSDYGRLKDALEKLHLNDSSLVFEPETSSALGFGYRCGFLGLLHMDVIQERLEREYDLNLITTAPSVVYKVNKTDGEVLSIDNPSNLPKVDEIETIEEPIVKANIMVPSDFVGAIMELNQEKRGNFLNMDYLSANRVTLHYELPLSEIVYDYFDQLKSRTKGYASLDYELAGYKAASLVKLDVLLNGELVDALSFIVHKEKSYARGRRLVEKLRGIIPRQMFEVPIQAVIGQKVVARETVKAMRKDVLAKCYGGDISRKRKLLEKQKEGKKRMKQVGSVEIPQDAFMAVLKIDD</sequence>
<accession>B8FUP2</accession>
<feature type="chain" id="PRO_1000190808" description="Elongation factor 4">
    <location>
        <begin position="1"/>
        <end position="601"/>
    </location>
</feature>
<feature type="domain" description="tr-type G">
    <location>
        <begin position="6"/>
        <end position="188"/>
    </location>
</feature>
<feature type="binding site" evidence="1">
    <location>
        <begin position="18"/>
        <end position="23"/>
    </location>
    <ligand>
        <name>GTP</name>
        <dbReference type="ChEBI" id="CHEBI:37565"/>
    </ligand>
</feature>
<feature type="binding site" evidence="1">
    <location>
        <begin position="135"/>
        <end position="138"/>
    </location>
    <ligand>
        <name>GTP</name>
        <dbReference type="ChEBI" id="CHEBI:37565"/>
    </ligand>
</feature>
<comment type="function">
    <text evidence="1">Required for accurate and efficient protein synthesis under certain stress conditions. May act as a fidelity factor of the translation reaction, by catalyzing a one-codon backward translocation of tRNAs on improperly translocated ribosomes. Back-translocation proceeds from a post-translocation (POST) complex to a pre-translocation (PRE) complex, thus giving elongation factor G a second chance to translocate the tRNAs correctly. Binds to ribosomes in a GTP-dependent manner.</text>
</comment>
<comment type="catalytic activity">
    <reaction evidence="1">
        <text>GTP + H2O = GDP + phosphate + H(+)</text>
        <dbReference type="Rhea" id="RHEA:19669"/>
        <dbReference type="ChEBI" id="CHEBI:15377"/>
        <dbReference type="ChEBI" id="CHEBI:15378"/>
        <dbReference type="ChEBI" id="CHEBI:37565"/>
        <dbReference type="ChEBI" id="CHEBI:43474"/>
        <dbReference type="ChEBI" id="CHEBI:58189"/>
        <dbReference type="EC" id="3.6.5.n1"/>
    </reaction>
</comment>
<comment type="subcellular location">
    <subcellularLocation>
        <location evidence="1">Cell membrane</location>
        <topology evidence="1">Peripheral membrane protein</topology>
        <orientation evidence="1">Cytoplasmic side</orientation>
    </subcellularLocation>
</comment>
<comment type="similarity">
    <text evidence="1">Belongs to the TRAFAC class translation factor GTPase superfamily. Classic translation factor GTPase family. LepA subfamily.</text>
</comment>
<protein>
    <recommendedName>
        <fullName evidence="1">Elongation factor 4</fullName>
        <shortName evidence="1">EF-4</shortName>
        <ecNumber evidence="1">3.6.5.n1</ecNumber>
    </recommendedName>
    <alternativeName>
        <fullName evidence="1">Ribosomal back-translocase LepA</fullName>
    </alternativeName>
</protein>
<reference key="1">
    <citation type="journal article" date="2012" name="BMC Microbiol.">
        <title>Genome sequence of Desulfitobacterium hafniense DCB-2, a Gram-positive anaerobe capable of dehalogenation and metal reduction.</title>
        <authorList>
            <person name="Kim S.H."/>
            <person name="Harzman C."/>
            <person name="Davis J.K."/>
            <person name="Hutcheson R."/>
            <person name="Broderick J.B."/>
            <person name="Marsh T.L."/>
            <person name="Tiedje J.M."/>
        </authorList>
    </citation>
    <scope>NUCLEOTIDE SEQUENCE [LARGE SCALE GENOMIC DNA]</scope>
    <source>
        <strain>DSM 10664 / DCB-2</strain>
    </source>
</reference>
<gene>
    <name evidence="1" type="primary">lepA</name>
    <name type="ordered locus">Dhaf_4307</name>
</gene>
<organism>
    <name type="scientific">Desulfitobacterium hafniense (strain DSM 10664 / DCB-2)</name>
    <dbReference type="NCBI Taxonomy" id="272564"/>
    <lineage>
        <taxon>Bacteria</taxon>
        <taxon>Bacillati</taxon>
        <taxon>Bacillota</taxon>
        <taxon>Clostridia</taxon>
        <taxon>Eubacteriales</taxon>
        <taxon>Desulfitobacteriaceae</taxon>
        <taxon>Desulfitobacterium</taxon>
    </lineage>
</organism>
<name>LEPA_DESHD</name>
<keyword id="KW-1003">Cell membrane</keyword>
<keyword id="KW-0342">GTP-binding</keyword>
<keyword id="KW-0378">Hydrolase</keyword>
<keyword id="KW-0472">Membrane</keyword>
<keyword id="KW-0547">Nucleotide-binding</keyword>
<keyword id="KW-0648">Protein biosynthesis</keyword>
<evidence type="ECO:0000255" key="1">
    <source>
        <dbReference type="HAMAP-Rule" id="MF_00071"/>
    </source>
</evidence>
<proteinExistence type="inferred from homology"/>